<feature type="chain" id="PRO_0000395989" description="Host range factor p28">
    <location>
        <begin position="1"/>
        <end position="242"/>
    </location>
</feature>
<feature type="domain" description="KilA-N" evidence="3">
    <location>
        <begin position="21"/>
        <end position="131"/>
    </location>
</feature>
<feature type="zinc finger region" description="RING-type" evidence="2">
    <location>
        <begin position="173"/>
        <end position="226"/>
    </location>
</feature>
<proteinExistence type="inferred from homology"/>
<evidence type="ECO:0000250" key="1">
    <source>
        <dbReference type="UniProtKB" id="Q85318"/>
    </source>
</evidence>
<evidence type="ECO:0000255" key="2">
    <source>
        <dbReference type="PROSITE-ProRule" id="PRU00175"/>
    </source>
</evidence>
<evidence type="ECO:0000255" key="3">
    <source>
        <dbReference type="PROSITE-ProRule" id="PRU00631"/>
    </source>
</evidence>
<evidence type="ECO:0000305" key="4"/>
<name>PG021_CWPXB</name>
<dbReference type="EC" id="2.3.2.27"/>
<dbReference type="EMBL" id="AF482758">
    <property type="protein sequence ID" value="AAM13470.1"/>
    <property type="molecule type" value="Genomic_DNA"/>
</dbReference>
<dbReference type="DNASU" id="1485898"/>
<dbReference type="KEGG" id="vg:1485898"/>
<dbReference type="Proteomes" id="UP000152733">
    <property type="component" value="Segment"/>
</dbReference>
<dbReference type="GO" id="GO:0030430">
    <property type="term" value="C:host cell cytoplasm"/>
    <property type="evidence" value="ECO:0007669"/>
    <property type="project" value="UniProtKB-SubCell"/>
</dbReference>
<dbReference type="GO" id="GO:0016881">
    <property type="term" value="F:acid-amino acid ligase activity"/>
    <property type="evidence" value="ECO:0007669"/>
    <property type="project" value="InterPro"/>
</dbReference>
<dbReference type="GO" id="GO:0061630">
    <property type="term" value="F:ubiquitin protein ligase activity"/>
    <property type="evidence" value="ECO:0007669"/>
    <property type="project" value="InterPro"/>
</dbReference>
<dbReference type="GO" id="GO:0008270">
    <property type="term" value="F:zinc ion binding"/>
    <property type="evidence" value="ECO:0007669"/>
    <property type="project" value="UniProtKB-KW"/>
</dbReference>
<dbReference type="GO" id="GO:0000209">
    <property type="term" value="P:protein polyubiquitination"/>
    <property type="evidence" value="ECO:0007669"/>
    <property type="project" value="InterPro"/>
</dbReference>
<dbReference type="GO" id="GO:0052150">
    <property type="term" value="P:symbiont-mediated perturbation of host apoptosis"/>
    <property type="evidence" value="ECO:0007669"/>
    <property type="project" value="UniProtKB-KW"/>
</dbReference>
<dbReference type="GO" id="GO:0039648">
    <property type="term" value="P:symbiont-mediated perturbation of host ubiquitin-like protein modification"/>
    <property type="evidence" value="ECO:0007669"/>
    <property type="project" value="UniProtKB-KW"/>
</dbReference>
<dbReference type="Gene3D" id="3.30.40.10">
    <property type="entry name" value="Zinc/RING finger domain, C3HC4 (zinc finger)"/>
    <property type="match status" value="1"/>
</dbReference>
<dbReference type="InterPro" id="IPR016398">
    <property type="entry name" value="E3_ubiquitin-prot_ligase_p28"/>
</dbReference>
<dbReference type="InterPro" id="IPR018004">
    <property type="entry name" value="KilA/APSES_HTH"/>
</dbReference>
<dbReference type="InterPro" id="IPR017880">
    <property type="entry name" value="KilA_N"/>
</dbReference>
<dbReference type="InterPro" id="IPR045072">
    <property type="entry name" value="MKRN-like"/>
</dbReference>
<dbReference type="InterPro" id="IPR001841">
    <property type="entry name" value="Znf_RING"/>
</dbReference>
<dbReference type="InterPro" id="IPR013083">
    <property type="entry name" value="Znf_RING/FYVE/PHD"/>
</dbReference>
<dbReference type="InterPro" id="IPR017907">
    <property type="entry name" value="Znf_RING_CS"/>
</dbReference>
<dbReference type="PANTHER" id="PTHR11224:SF10">
    <property type="entry name" value="IP09428P-RELATED"/>
    <property type="match status" value="1"/>
</dbReference>
<dbReference type="PANTHER" id="PTHR11224">
    <property type="entry name" value="MAKORIN-RELATED"/>
    <property type="match status" value="1"/>
</dbReference>
<dbReference type="Pfam" id="PF04383">
    <property type="entry name" value="KilA-N"/>
    <property type="match status" value="1"/>
</dbReference>
<dbReference type="Pfam" id="PF13639">
    <property type="entry name" value="zf-RING_2"/>
    <property type="match status" value="1"/>
</dbReference>
<dbReference type="PIRSF" id="PIRSF003775">
    <property type="entry name" value="E3_ubiquit_lig_p28"/>
    <property type="match status" value="1"/>
</dbReference>
<dbReference type="SMART" id="SM00184">
    <property type="entry name" value="RING"/>
    <property type="match status" value="1"/>
</dbReference>
<dbReference type="SUPFAM" id="SSF57850">
    <property type="entry name" value="RING/U-box"/>
    <property type="match status" value="1"/>
</dbReference>
<dbReference type="PROSITE" id="PS51301">
    <property type="entry name" value="KILA_N"/>
    <property type="match status" value="1"/>
</dbReference>
<dbReference type="PROSITE" id="PS00518">
    <property type="entry name" value="ZF_RING_1"/>
    <property type="match status" value="1"/>
</dbReference>
<dbReference type="PROSITE" id="PS50089">
    <property type="entry name" value="ZF_RING_2"/>
    <property type="match status" value="1"/>
</dbReference>
<gene>
    <name type="primary">OPG021</name>
    <name type="synonym">p28</name>
    <name type="ordered locus">CPXV023</name>
</gene>
<organism>
    <name type="scientific">Cowpox virus (strain Brighton Red)</name>
    <name type="common">CPV</name>
    <dbReference type="NCBI Taxonomy" id="265872"/>
    <lineage>
        <taxon>Viruses</taxon>
        <taxon>Varidnaviria</taxon>
        <taxon>Bamfordvirae</taxon>
        <taxon>Nucleocytoviricota</taxon>
        <taxon>Pokkesviricetes</taxon>
        <taxon>Chitovirales</taxon>
        <taxon>Poxviridae</taxon>
        <taxon>Chordopoxvirinae</taxon>
        <taxon>Orthopoxvirus</taxon>
        <taxon>Cowpox virus</taxon>
    </lineage>
</organism>
<organismHost>
    <name type="scientific">Bos taurus</name>
    <name type="common">Bovine</name>
    <dbReference type="NCBI Taxonomy" id="9913"/>
</organismHost>
<organismHost>
    <name type="scientific">Felis catus</name>
    <name type="common">Cat</name>
    <name type="synonym">Felis silvestris catus</name>
    <dbReference type="NCBI Taxonomy" id="9685"/>
</organismHost>
<organismHost>
    <name type="scientific">Homo sapiens</name>
    <name type="common">Human</name>
    <dbReference type="NCBI Taxonomy" id="9606"/>
</organismHost>
<organismHost>
    <name type="scientific">Loxodonta africana</name>
    <name type="common">African elephant</name>
    <dbReference type="NCBI Taxonomy" id="9785"/>
</organismHost>
<organismHost>
    <name type="scientific">Microtus agrestis</name>
    <name type="common">Short-tailed field vole</name>
    <dbReference type="NCBI Taxonomy" id="29092"/>
</organismHost>
<organismHost>
    <name type="scientific">Mus musculus</name>
    <name type="common">Mouse</name>
    <dbReference type="NCBI Taxonomy" id="10090"/>
</organismHost>
<organismHost>
    <name type="scientific">Myodes glareolus</name>
    <name type="common">Bank vole</name>
    <name type="synonym">Clethrionomys glareolus</name>
    <dbReference type="NCBI Taxonomy" id="447135"/>
</organismHost>
<keyword id="KW-1035">Host cytoplasm</keyword>
<keyword id="KW-0945">Host-virus interaction</keyword>
<keyword id="KW-0479">Metal-binding</keyword>
<keyword id="KW-1119">Modulation of host cell apoptosis by virus</keyword>
<keyword id="KW-1128">Modulation of host ubiquitin pathway by viral E3 ligase</keyword>
<keyword id="KW-1130">Modulation of host ubiquitin pathway by virus</keyword>
<keyword id="KW-0808">Transferase</keyword>
<keyword id="KW-0833">Ubl conjugation pathway</keyword>
<keyword id="KW-0862">Zinc</keyword>
<keyword id="KW-0863">Zinc-finger</keyword>
<reference key="1">
    <citation type="submission" date="2003-05" db="EMBL/GenBank/DDBJ databases">
        <authorList>
            <person name="Dietrich F.S."/>
            <person name="Ray C.A."/>
            <person name="Sharma A.D."/>
            <person name="Allen A."/>
            <person name="Pickup D.J."/>
        </authorList>
    </citation>
    <scope>NUCLEOTIDE SEQUENCE [LARGE SCALE GENOMIC DNA]</scope>
</reference>
<protein>
    <recommendedName>
        <fullName>Host range factor p28</fullName>
        <ecNumber>2.3.2.27</ecNumber>
    </recommendedName>
    <alternativeName>
        <fullName>E3 ubiquitin-protein ligase p28</fullName>
    </alternativeName>
    <alternativeName>
        <fullName>Protein CPXV023</fullName>
    </alternativeName>
</protein>
<comment type="function">
    <text evidence="1">RING-finger E3 ubiquitin ligase which catalyzes the formation of both 'Lys-48'- and 'Lys-63'-linked polyubiquitin chains. Plays an important role in virulence by acting as an anti-apoptotic factor.</text>
</comment>
<comment type="catalytic activity">
    <reaction>
        <text>S-ubiquitinyl-[E2 ubiquitin-conjugating enzyme]-L-cysteine + [acceptor protein]-L-lysine = [E2 ubiquitin-conjugating enzyme]-L-cysteine + N(6)-ubiquitinyl-[acceptor protein]-L-lysine.</text>
        <dbReference type="EC" id="2.3.2.27"/>
    </reaction>
</comment>
<comment type="subcellular location">
    <subcellularLocation>
        <location>Host cytoplasm</location>
    </subcellularLocation>
    <text evidence="1">Localizes to viral factories, the sites of virus replication.</text>
</comment>
<comment type="similarity">
    <text evidence="4">Belongs to the orthopoxvirus OPG021 family.</text>
</comment>
<accession>Q8QN38</accession>
<sequence length="242" mass="28611">MEFDPTKINISSIDHVTILQYIDEPNDIRLTVCIIQNINNITYYINITKINPHLANQFRTWKKRIAGRDYMTNLSRDTGIQQSKLTETIRNCQKNRNIYGLYIHYNLVINVVIDWITDVIVQSILRGLVNWYIANNNYTPNTPNNTTTISELDIIKILDKYEEVYRVSKEKECGICYEVVYSKRLENDRYFGLLDSCNHIFCITCINIWHRTRRETGASDNCPICRTRFRNITMSKFYKLVN</sequence>